<evidence type="ECO:0000250" key="1"/>
<evidence type="ECO:0000255" key="2"/>
<evidence type="ECO:0000256" key="3">
    <source>
        <dbReference type="SAM" id="MobiDB-lite"/>
    </source>
</evidence>
<protein>
    <recommendedName>
        <fullName>Alternative prion protein</fullName>
    </recommendedName>
    <alternativeName>
        <fullName>AltPrP</fullName>
    </alternativeName>
</protein>
<name>APRIO_SHEEP</name>
<comment type="subcellular location">
    <subcellularLocation>
        <location evidence="1">Mitochondrion outer membrane</location>
        <topology evidence="1">Single-pass membrane protein</topology>
    </subcellularLocation>
</comment>
<comment type="miscellaneous">
    <text>This protein is produced by a bicistronic gene which also produces the major prion protein/PRNP from an overlapping reading frame.</text>
</comment>
<comment type="miscellaneous">
    <text evidence="1">The alternative prion protein and PRNP (AC P23907) have no apparent direct functional relation since a mutation that removes the start codon of the AltPrP has no apparent effect on the biology of PRNP (By similarity). In mouse and hamster, the alternative initiation AUG codon is absent and is replaced by a GUG codon.</text>
</comment>
<accession>F7VJQ3</accession>
<proteinExistence type="inferred from homology"/>
<sequence length="64" mass="7619">MEHWGEPIPGTGQSWRQPLSTSGRGWLGSAPWRWLGPTSWRWLGSAPWWWLGTATWWWRLGSRW</sequence>
<organism>
    <name type="scientific">Ovis aries</name>
    <name type="common">Sheep</name>
    <dbReference type="NCBI Taxonomy" id="9940"/>
    <lineage>
        <taxon>Eukaryota</taxon>
        <taxon>Metazoa</taxon>
        <taxon>Chordata</taxon>
        <taxon>Craniata</taxon>
        <taxon>Vertebrata</taxon>
        <taxon>Euteleostomi</taxon>
        <taxon>Mammalia</taxon>
        <taxon>Eutheria</taxon>
        <taxon>Laurasiatheria</taxon>
        <taxon>Artiodactyla</taxon>
        <taxon>Ruminantia</taxon>
        <taxon>Pecora</taxon>
        <taxon>Bovidae</taxon>
        <taxon>Caprinae</taxon>
        <taxon>Ovis</taxon>
    </lineage>
</organism>
<dbReference type="EMBL" id="HE993880">
    <property type="status" value="NOT_ANNOTATED_CDS"/>
    <property type="molecule type" value="Genomic_DNA"/>
</dbReference>
<dbReference type="EMBL" id="BK007889">
    <property type="protein sequence ID" value="DAA34792.1"/>
    <property type="molecule type" value="Genomic_DNA"/>
</dbReference>
<dbReference type="Proteomes" id="UP000002356">
    <property type="component" value="Unplaced"/>
</dbReference>
<dbReference type="GO" id="GO:0005741">
    <property type="term" value="C:mitochondrial outer membrane"/>
    <property type="evidence" value="ECO:0000250"/>
    <property type="project" value="UniProtKB"/>
</dbReference>
<keyword id="KW-0472">Membrane</keyword>
<keyword id="KW-0496">Mitochondrion</keyword>
<keyword id="KW-1000">Mitochondrion outer membrane</keyword>
<keyword id="KW-1185">Reference proteome</keyword>
<keyword id="KW-0812">Transmembrane</keyword>
<keyword id="KW-1133">Transmembrane helix</keyword>
<reference key="1">
    <citation type="submission" date="2012-09" db="EMBL/GenBank/DDBJ databases">
        <authorList>
            <person name="Roucou X."/>
        </authorList>
    </citation>
    <scope>NUCLEOTIDE SEQUENCE [GENOMIC DNA]</scope>
</reference>
<reference key="2">
    <citation type="journal article" date="2011" name="FASEB J.">
        <title>An overlapping reading frame in the PRNP gene encodes a novel polypeptide distinct from the prion protein.</title>
        <authorList>
            <person name="Vanderperre B."/>
            <person name="Staskevicius A.B."/>
            <person name="Tremblay G."/>
            <person name="McCoy M."/>
            <person name="O'Neill M.A."/>
            <person name="Cashman N.R."/>
            <person name="Roucou X."/>
        </authorList>
    </citation>
    <scope>IDENTIFICATION</scope>
</reference>
<feature type="chain" id="PRO_0000420425" description="Alternative prion protein">
    <location>
        <begin position="1"/>
        <end position="64"/>
    </location>
</feature>
<feature type="transmembrane region" description="Helical" evidence="2">
    <location>
        <begin position="40"/>
        <end position="58"/>
    </location>
</feature>
<feature type="region of interest" description="Disordered" evidence="3">
    <location>
        <begin position="1"/>
        <end position="22"/>
    </location>
</feature>
<feature type="compositionally biased region" description="Polar residues" evidence="3">
    <location>
        <begin position="11"/>
        <end position="22"/>
    </location>
</feature>